<name>LFTR_HAMD5</name>
<accession>C4K842</accession>
<feature type="chain" id="PRO_1000212570" description="Leucyl/phenylalanyl-tRNA--protein transferase">
    <location>
        <begin position="1"/>
        <end position="230"/>
    </location>
</feature>
<evidence type="ECO:0000255" key="1">
    <source>
        <dbReference type="HAMAP-Rule" id="MF_00688"/>
    </source>
</evidence>
<sequence length="230" mass="25636">MFIKNLSKNIIDFPKPEKALKDPNGLLASGGDLSPERLLVAYQNGIFPWFNEGEPILWWSPDPRAVLLKCHVSRSMKRFIRPGRCPYHFSLNCAFSDVITTCATKRSGCTWISSDIVKAYCQLHRLGRAHSVEVWLKDKLVGGLYGISVGAMFCGESMFSIADNASKSALIIFEHYFTQKGGKWIDCQVLNAHTACLGAEQIPRNDFLSLLDQAQRVSLPKGVWSPQSLG</sequence>
<dbReference type="EC" id="2.3.2.6" evidence="1"/>
<dbReference type="EMBL" id="CP001277">
    <property type="protein sequence ID" value="ACQ66802.1"/>
    <property type="molecule type" value="Genomic_DNA"/>
</dbReference>
<dbReference type="RefSeq" id="WP_012737767.1">
    <property type="nucleotide sequence ID" value="NC_012751.1"/>
</dbReference>
<dbReference type="SMR" id="C4K842"/>
<dbReference type="STRING" id="572265.HDEF_0026"/>
<dbReference type="GeneID" id="66259970"/>
<dbReference type="KEGG" id="hde:HDEF_0026"/>
<dbReference type="eggNOG" id="COG2360">
    <property type="taxonomic scope" value="Bacteria"/>
</dbReference>
<dbReference type="HOGENOM" id="CLU_075045_0_0_6"/>
<dbReference type="Proteomes" id="UP000002334">
    <property type="component" value="Chromosome"/>
</dbReference>
<dbReference type="GO" id="GO:0005737">
    <property type="term" value="C:cytoplasm"/>
    <property type="evidence" value="ECO:0007669"/>
    <property type="project" value="UniProtKB-SubCell"/>
</dbReference>
<dbReference type="GO" id="GO:0008914">
    <property type="term" value="F:leucyl-tRNA--protein transferase activity"/>
    <property type="evidence" value="ECO:0007669"/>
    <property type="project" value="UniProtKB-UniRule"/>
</dbReference>
<dbReference type="GO" id="GO:0030163">
    <property type="term" value="P:protein catabolic process"/>
    <property type="evidence" value="ECO:0007669"/>
    <property type="project" value="UniProtKB-UniRule"/>
</dbReference>
<dbReference type="FunFam" id="3.30.70.3550:FF:000001">
    <property type="entry name" value="Leucyl/phenylalanyl-tRNA--protein transferase"/>
    <property type="match status" value="1"/>
</dbReference>
<dbReference type="FunFam" id="3.40.630.70:FF:000001">
    <property type="entry name" value="Leucyl/phenylalanyl-tRNA--protein transferase"/>
    <property type="match status" value="1"/>
</dbReference>
<dbReference type="Gene3D" id="3.40.630.70">
    <property type="entry name" value="Leucyl/phenylalanyl-tRNA-protein transferase, C-terminal domain"/>
    <property type="match status" value="1"/>
</dbReference>
<dbReference type="Gene3D" id="3.30.70.3550">
    <property type="entry name" value="Leucyl/phenylalanyl-tRNA-protein transferase, N-terminal domain"/>
    <property type="match status" value="1"/>
</dbReference>
<dbReference type="HAMAP" id="MF_00688">
    <property type="entry name" value="Leu_Phe_trans"/>
    <property type="match status" value="1"/>
</dbReference>
<dbReference type="InterPro" id="IPR016181">
    <property type="entry name" value="Acyl_CoA_acyltransferase"/>
</dbReference>
<dbReference type="InterPro" id="IPR004616">
    <property type="entry name" value="Leu/Phe-tRNA_Trfase"/>
</dbReference>
<dbReference type="InterPro" id="IPR042203">
    <property type="entry name" value="Leu/Phe-tRNA_Trfase_C"/>
</dbReference>
<dbReference type="InterPro" id="IPR042221">
    <property type="entry name" value="Leu/Phe-tRNA_Trfase_N"/>
</dbReference>
<dbReference type="NCBIfam" id="TIGR00667">
    <property type="entry name" value="aat"/>
    <property type="match status" value="1"/>
</dbReference>
<dbReference type="PANTHER" id="PTHR30098">
    <property type="entry name" value="LEUCYL/PHENYLALANYL-TRNA--PROTEIN TRANSFERASE"/>
    <property type="match status" value="1"/>
</dbReference>
<dbReference type="PANTHER" id="PTHR30098:SF2">
    <property type="entry name" value="LEUCYL_PHENYLALANYL-TRNA--PROTEIN TRANSFERASE"/>
    <property type="match status" value="1"/>
</dbReference>
<dbReference type="Pfam" id="PF03588">
    <property type="entry name" value="Leu_Phe_trans"/>
    <property type="match status" value="1"/>
</dbReference>
<dbReference type="SUPFAM" id="SSF55729">
    <property type="entry name" value="Acyl-CoA N-acyltransferases (Nat)"/>
    <property type="match status" value="1"/>
</dbReference>
<protein>
    <recommendedName>
        <fullName evidence="1">Leucyl/phenylalanyl-tRNA--protein transferase</fullName>
        <ecNumber evidence="1">2.3.2.6</ecNumber>
    </recommendedName>
    <alternativeName>
        <fullName evidence="1">L/F-transferase</fullName>
    </alternativeName>
    <alternativeName>
        <fullName evidence="1">Leucyltransferase</fullName>
    </alternativeName>
    <alternativeName>
        <fullName evidence="1">Phenyalanyltransferase</fullName>
    </alternativeName>
</protein>
<comment type="function">
    <text evidence="1">Functions in the N-end rule pathway of protein degradation where it conjugates Leu, Phe and, less efficiently, Met from aminoacyl-tRNAs to the N-termini of proteins containing an N-terminal arginine or lysine.</text>
</comment>
<comment type="catalytic activity">
    <reaction evidence="1">
        <text>N-terminal L-lysyl-[protein] + L-leucyl-tRNA(Leu) = N-terminal L-leucyl-L-lysyl-[protein] + tRNA(Leu) + H(+)</text>
        <dbReference type="Rhea" id="RHEA:12340"/>
        <dbReference type="Rhea" id="RHEA-COMP:9613"/>
        <dbReference type="Rhea" id="RHEA-COMP:9622"/>
        <dbReference type="Rhea" id="RHEA-COMP:12670"/>
        <dbReference type="Rhea" id="RHEA-COMP:12671"/>
        <dbReference type="ChEBI" id="CHEBI:15378"/>
        <dbReference type="ChEBI" id="CHEBI:65249"/>
        <dbReference type="ChEBI" id="CHEBI:78442"/>
        <dbReference type="ChEBI" id="CHEBI:78494"/>
        <dbReference type="ChEBI" id="CHEBI:133043"/>
        <dbReference type="EC" id="2.3.2.6"/>
    </reaction>
</comment>
<comment type="catalytic activity">
    <reaction evidence="1">
        <text>N-terminal L-arginyl-[protein] + L-leucyl-tRNA(Leu) = N-terminal L-leucyl-L-arginyl-[protein] + tRNA(Leu) + H(+)</text>
        <dbReference type="Rhea" id="RHEA:50416"/>
        <dbReference type="Rhea" id="RHEA-COMP:9613"/>
        <dbReference type="Rhea" id="RHEA-COMP:9622"/>
        <dbReference type="Rhea" id="RHEA-COMP:12672"/>
        <dbReference type="Rhea" id="RHEA-COMP:12673"/>
        <dbReference type="ChEBI" id="CHEBI:15378"/>
        <dbReference type="ChEBI" id="CHEBI:64719"/>
        <dbReference type="ChEBI" id="CHEBI:78442"/>
        <dbReference type="ChEBI" id="CHEBI:78494"/>
        <dbReference type="ChEBI" id="CHEBI:133044"/>
        <dbReference type="EC" id="2.3.2.6"/>
    </reaction>
</comment>
<comment type="catalytic activity">
    <reaction evidence="1">
        <text>L-phenylalanyl-tRNA(Phe) + an N-terminal L-alpha-aminoacyl-[protein] = an N-terminal L-phenylalanyl-L-alpha-aminoacyl-[protein] + tRNA(Phe)</text>
        <dbReference type="Rhea" id="RHEA:43632"/>
        <dbReference type="Rhea" id="RHEA-COMP:9668"/>
        <dbReference type="Rhea" id="RHEA-COMP:9699"/>
        <dbReference type="Rhea" id="RHEA-COMP:10636"/>
        <dbReference type="Rhea" id="RHEA-COMP:10637"/>
        <dbReference type="ChEBI" id="CHEBI:78442"/>
        <dbReference type="ChEBI" id="CHEBI:78531"/>
        <dbReference type="ChEBI" id="CHEBI:78597"/>
        <dbReference type="ChEBI" id="CHEBI:83561"/>
        <dbReference type="EC" id="2.3.2.6"/>
    </reaction>
</comment>
<comment type="subcellular location">
    <subcellularLocation>
        <location evidence="1">Cytoplasm</location>
    </subcellularLocation>
</comment>
<comment type="similarity">
    <text evidence="1">Belongs to the L/F-transferase family.</text>
</comment>
<keyword id="KW-0012">Acyltransferase</keyword>
<keyword id="KW-0963">Cytoplasm</keyword>
<keyword id="KW-0808">Transferase</keyword>
<gene>
    <name evidence="1" type="primary">aat</name>
    <name type="ordered locus">HDEF_0026</name>
</gene>
<organism>
    <name type="scientific">Hamiltonella defensa subsp. Acyrthosiphon pisum (strain 5AT)</name>
    <dbReference type="NCBI Taxonomy" id="572265"/>
    <lineage>
        <taxon>Bacteria</taxon>
        <taxon>Pseudomonadati</taxon>
        <taxon>Pseudomonadota</taxon>
        <taxon>Gammaproteobacteria</taxon>
        <taxon>Enterobacterales</taxon>
        <taxon>Enterobacteriaceae</taxon>
        <taxon>aphid secondary symbionts</taxon>
        <taxon>Candidatus Hamiltonella</taxon>
    </lineage>
</organism>
<reference key="1">
    <citation type="journal article" date="2009" name="Proc. Natl. Acad. Sci. U.S.A.">
        <title>Hamiltonella defensa, genome evolution of protective bacterial endosymbiont from pathogenic ancestors.</title>
        <authorList>
            <person name="Degnan P.H."/>
            <person name="Yu Y."/>
            <person name="Sisneros N."/>
            <person name="Wing R.A."/>
            <person name="Moran N.A."/>
        </authorList>
    </citation>
    <scope>NUCLEOTIDE SEQUENCE [LARGE SCALE GENOMIC DNA]</scope>
    <source>
        <strain>5AT</strain>
    </source>
</reference>
<proteinExistence type="inferred from homology"/>